<organism>
    <name type="scientific">Photobacterium phosphoreum</name>
    <dbReference type="NCBI Taxonomy" id="659"/>
    <lineage>
        <taxon>Bacteria</taxon>
        <taxon>Pseudomonadati</taxon>
        <taxon>Pseudomonadota</taxon>
        <taxon>Gammaproteobacteria</taxon>
        <taxon>Vibrionales</taxon>
        <taxon>Vibrionaceae</taxon>
        <taxon>Photobacterium</taxon>
    </lineage>
</organism>
<sequence length="155" mass="16543">MKVIEGAIVAPNAKVAIVIARFNSFINESLLSGALDTLKRQGQVSYDNITIIRCPGAYELPLVAQLTAKSDRYDAIIALGSVIRGGTHFEYVASECNKGLAQVALDYNIPVAFGVLTVDYLEQAIERAGTKAGNKGAEAALMLLEMVNILAQVES</sequence>
<proteinExistence type="inferred from homology"/>
<protein>
    <recommendedName>
        <fullName evidence="1">6,7-dimethyl-8-ribityllumazine synthase</fullName>
        <shortName evidence="1">DMRL synthase</shortName>
        <shortName evidence="1">LS</shortName>
        <shortName evidence="1">Lumazine synthase</shortName>
        <ecNumber evidence="1">2.5.1.78</ecNumber>
    </recommendedName>
</protein>
<reference key="1">
    <citation type="journal article" date="1994" name="J. Bacteriol.">
        <title>Riboflavin synthesis genes are linked with the lux operon of Photobacterium phosphoreum.</title>
        <authorList>
            <person name="Lee C.Y."/>
            <person name="O'Kane D.J."/>
            <person name="Meighen E.A."/>
        </authorList>
    </citation>
    <scope>NUCLEOTIDE SEQUENCE [GENOMIC DNA]</scope>
    <source>
        <strain>DSM 2167 / CIP 104260 / LMG 4231 / NCIMB 844</strain>
    </source>
</reference>
<dbReference type="EC" id="2.5.1.78" evidence="1"/>
<dbReference type="EMBL" id="L11391">
    <property type="protein sequence ID" value="AAA25630.1"/>
    <property type="molecule type" value="Genomic_DNA"/>
</dbReference>
<dbReference type="SMR" id="P51963"/>
<dbReference type="STRING" id="659.AYY26_10955"/>
<dbReference type="BRENDA" id="2.5.1.78">
    <property type="organism ID" value="4779"/>
</dbReference>
<dbReference type="UniPathway" id="UPA00275">
    <property type="reaction ID" value="UER00404"/>
</dbReference>
<dbReference type="GO" id="GO:0005829">
    <property type="term" value="C:cytosol"/>
    <property type="evidence" value="ECO:0007669"/>
    <property type="project" value="TreeGrafter"/>
</dbReference>
<dbReference type="GO" id="GO:0009349">
    <property type="term" value="C:riboflavin synthase complex"/>
    <property type="evidence" value="ECO:0007669"/>
    <property type="project" value="InterPro"/>
</dbReference>
<dbReference type="GO" id="GO:0000906">
    <property type="term" value="F:6,7-dimethyl-8-ribityllumazine synthase activity"/>
    <property type="evidence" value="ECO:0007669"/>
    <property type="project" value="UniProtKB-UniRule"/>
</dbReference>
<dbReference type="GO" id="GO:0009231">
    <property type="term" value="P:riboflavin biosynthetic process"/>
    <property type="evidence" value="ECO:0007669"/>
    <property type="project" value="UniProtKB-UniRule"/>
</dbReference>
<dbReference type="CDD" id="cd09209">
    <property type="entry name" value="Lumazine_synthase-I"/>
    <property type="match status" value="1"/>
</dbReference>
<dbReference type="FunFam" id="3.40.50.960:FF:000001">
    <property type="entry name" value="6,7-dimethyl-8-ribityllumazine synthase"/>
    <property type="match status" value="1"/>
</dbReference>
<dbReference type="Gene3D" id="3.40.50.960">
    <property type="entry name" value="Lumazine/riboflavin synthase"/>
    <property type="match status" value="1"/>
</dbReference>
<dbReference type="HAMAP" id="MF_00178">
    <property type="entry name" value="Lumazine_synth"/>
    <property type="match status" value="1"/>
</dbReference>
<dbReference type="InterPro" id="IPR034964">
    <property type="entry name" value="LS"/>
</dbReference>
<dbReference type="InterPro" id="IPR002180">
    <property type="entry name" value="LS/RS"/>
</dbReference>
<dbReference type="InterPro" id="IPR036467">
    <property type="entry name" value="LS/RS_sf"/>
</dbReference>
<dbReference type="NCBIfam" id="TIGR00114">
    <property type="entry name" value="lumazine-synth"/>
    <property type="match status" value="1"/>
</dbReference>
<dbReference type="NCBIfam" id="NF000812">
    <property type="entry name" value="PRK00061.1-4"/>
    <property type="match status" value="1"/>
</dbReference>
<dbReference type="PANTHER" id="PTHR21058:SF0">
    <property type="entry name" value="6,7-DIMETHYL-8-RIBITYLLUMAZINE SYNTHASE"/>
    <property type="match status" value="1"/>
</dbReference>
<dbReference type="PANTHER" id="PTHR21058">
    <property type="entry name" value="6,7-DIMETHYL-8-RIBITYLLUMAZINE SYNTHASE DMRL SYNTHASE LUMAZINE SYNTHASE"/>
    <property type="match status" value="1"/>
</dbReference>
<dbReference type="Pfam" id="PF00885">
    <property type="entry name" value="DMRL_synthase"/>
    <property type="match status" value="1"/>
</dbReference>
<dbReference type="SUPFAM" id="SSF52121">
    <property type="entry name" value="Lumazine synthase"/>
    <property type="match status" value="1"/>
</dbReference>
<name>RISB_PHOPO</name>
<comment type="function">
    <text evidence="1">Catalyzes the formation of 6,7-dimethyl-8-ribityllumazine by condensation of 5-amino-6-(D-ribitylamino)uracil with 3,4-dihydroxy-2-butanone 4-phosphate. This is the penultimate step in the biosynthesis of riboflavin.</text>
</comment>
<comment type="catalytic activity">
    <reaction evidence="1">
        <text>(2S)-2-hydroxy-3-oxobutyl phosphate + 5-amino-6-(D-ribitylamino)uracil = 6,7-dimethyl-8-(1-D-ribityl)lumazine + phosphate + 2 H2O + H(+)</text>
        <dbReference type="Rhea" id="RHEA:26152"/>
        <dbReference type="ChEBI" id="CHEBI:15377"/>
        <dbReference type="ChEBI" id="CHEBI:15378"/>
        <dbReference type="ChEBI" id="CHEBI:15934"/>
        <dbReference type="ChEBI" id="CHEBI:43474"/>
        <dbReference type="ChEBI" id="CHEBI:58201"/>
        <dbReference type="ChEBI" id="CHEBI:58830"/>
        <dbReference type="EC" id="2.5.1.78"/>
    </reaction>
</comment>
<comment type="pathway">
    <text evidence="1">Cofactor biosynthesis; riboflavin biosynthesis; riboflavin from 2-hydroxy-3-oxobutyl phosphate and 5-amino-6-(D-ribitylamino)uracil: step 1/2.</text>
</comment>
<comment type="subunit">
    <text evidence="1">Forms an icosahedral capsid composed of 60 subunits, arranged as a dodecamer of pentamers.</text>
</comment>
<comment type="similarity">
    <text evidence="1">Belongs to the DMRL synthase family.</text>
</comment>
<evidence type="ECO:0000255" key="1">
    <source>
        <dbReference type="HAMAP-Rule" id="MF_00178"/>
    </source>
</evidence>
<keyword id="KW-0686">Riboflavin biosynthesis</keyword>
<keyword id="KW-0808">Transferase</keyword>
<feature type="chain" id="PRO_0000134782" description="6,7-dimethyl-8-ribityllumazine synthase">
    <location>
        <begin position="1"/>
        <end position="155"/>
    </location>
</feature>
<feature type="active site" description="Proton donor" evidence="1">
    <location>
        <position position="88"/>
    </location>
</feature>
<feature type="binding site" evidence="1">
    <location>
        <position position="22"/>
    </location>
    <ligand>
        <name>5-amino-6-(D-ribitylamino)uracil</name>
        <dbReference type="ChEBI" id="CHEBI:15934"/>
    </ligand>
</feature>
<feature type="binding site" evidence="1">
    <location>
        <begin position="57"/>
        <end position="59"/>
    </location>
    <ligand>
        <name>5-amino-6-(D-ribitylamino)uracil</name>
        <dbReference type="ChEBI" id="CHEBI:15934"/>
    </ligand>
</feature>
<feature type="binding site" evidence="1">
    <location>
        <begin position="81"/>
        <end position="83"/>
    </location>
    <ligand>
        <name>5-amino-6-(D-ribitylamino)uracil</name>
        <dbReference type="ChEBI" id="CHEBI:15934"/>
    </ligand>
</feature>
<feature type="binding site" evidence="1">
    <location>
        <begin position="86"/>
        <end position="87"/>
    </location>
    <ligand>
        <name>(2S)-2-hydroxy-3-oxobutyl phosphate</name>
        <dbReference type="ChEBI" id="CHEBI:58830"/>
    </ligand>
</feature>
<feature type="binding site" evidence="1">
    <location>
        <position position="113"/>
    </location>
    <ligand>
        <name>5-amino-6-(D-ribitylamino)uracil</name>
        <dbReference type="ChEBI" id="CHEBI:15934"/>
    </ligand>
</feature>
<feature type="binding site" evidence="1">
    <location>
        <position position="127"/>
    </location>
    <ligand>
        <name>(2S)-2-hydroxy-3-oxobutyl phosphate</name>
        <dbReference type="ChEBI" id="CHEBI:58830"/>
    </ligand>
</feature>
<accession>P51963</accession>
<gene>
    <name evidence="1" type="primary">ribH</name>
</gene>